<keyword id="KW-0479">Metal-binding</keyword>
<keyword id="KW-1185">Reference proteome</keyword>
<keyword id="KW-0687">Ribonucleoprotein</keyword>
<keyword id="KW-0689">Ribosomal protein</keyword>
<keyword id="KW-0694">RNA-binding</keyword>
<keyword id="KW-0699">rRNA-binding</keyword>
<keyword id="KW-0862">Zinc</keyword>
<name>RS14Z_LEPIN</name>
<proteinExistence type="inferred from homology"/>
<organism>
    <name type="scientific">Leptospira interrogans serogroup Icterohaemorrhagiae serovar Lai (strain 56601)</name>
    <dbReference type="NCBI Taxonomy" id="189518"/>
    <lineage>
        <taxon>Bacteria</taxon>
        <taxon>Pseudomonadati</taxon>
        <taxon>Spirochaetota</taxon>
        <taxon>Spirochaetia</taxon>
        <taxon>Leptospirales</taxon>
        <taxon>Leptospiraceae</taxon>
        <taxon>Leptospira</taxon>
    </lineage>
</organism>
<gene>
    <name evidence="1" type="primary">rpsZ</name>
    <name evidence="1" type="synonym">rpsN</name>
    <name type="ordered locus">LA_0752</name>
</gene>
<accession>Q9XD23</accession>
<dbReference type="EMBL" id="AF115283">
    <property type="protein sequence ID" value="AAD40596.1"/>
    <property type="molecule type" value="Genomic_DNA"/>
</dbReference>
<dbReference type="EMBL" id="AE010300">
    <property type="protein sequence ID" value="AAN47951.1"/>
    <property type="molecule type" value="Genomic_DNA"/>
</dbReference>
<dbReference type="RefSeq" id="NP_710933.1">
    <property type="nucleotide sequence ID" value="NC_004342.2"/>
</dbReference>
<dbReference type="RefSeq" id="WP_002153498.1">
    <property type="nucleotide sequence ID" value="NC_004342.2"/>
</dbReference>
<dbReference type="SMR" id="Q9XD23"/>
<dbReference type="STRING" id="189518.LA_0752"/>
<dbReference type="PaxDb" id="189518-LA_0752"/>
<dbReference type="EnsemblBacteria" id="AAN47951">
    <property type="protein sequence ID" value="AAN47951"/>
    <property type="gene ID" value="LA_0752"/>
</dbReference>
<dbReference type="KEGG" id="lil:LA_0752"/>
<dbReference type="HOGENOM" id="CLU_139869_3_0_12"/>
<dbReference type="InParanoid" id="Q9XD23"/>
<dbReference type="OrthoDB" id="9810484at2"/>
<dbReference type="Proteomes" id="UP000001408">
    <property type="component" value="Chromosome I"/>
</dbReference>
<dbReference type="GO" id="GO:0005737">
    <property type="term" value="C:cytoplasm"/>
    <property type="evidence" value="ECO:0007669"/>
    <property type="project" value="UniProtKB-ARBA"/>
</dbReference>
<dbReference type="GO" id="GO:0015935">
    <property type="term" value="C:small ribosomal subunit"/>
    <property type="evidence" value="ECO:0000318"/>
    <property type="project" value="GO_Central"/>
</dbReference>
<dbReference type="GO" id="GO:0019843">
    <property type="term" value="F:rRNA binding"/>
    <property type="evidence" value="ECO:0007669"/>
    <property type="project" value="UniProtKB-UniRule"/>
</dbReference>
<dbReference type="GO" id="GO:0003735">
    <property type="term" value="F:structural constituent of ribosome"/>
    <property type="evidence" value="ECO:0000318"/>
    <property type="project" value="GO_Central"/>
</dbReference>
<dbReference type="GO" id="GO:0008270">
    <property type="term" value="F:zinc ion binding"/>
    <property type="evidence" value="ECO:0007669"/>
    <property type="project" value="UniProtKB-UniRule"/>
</dbReference>
<dbReference type="GO" id="GO:0006412">
    <property type="term" value="P:translation"/>
    <property type="evidence" value="ECO:0000318"/>
    <property type="project" value="GO_Central"/>
</dbReference>
<dbReference type="FunFam" id="4.10.830.10:FF:000001">
    <property type="entry name" value="30S ribosomal protein S14 type Z"/>
    <property type="match status" value="1"/>
</dbReference>
<dbReference type="Gene3D" id="4.10.830.10">
    <property type="entry name" value="30s Ribosomal Protein S14, Chain N"/>
    <property type="match status" value="1"/>
</dbReference>
<dbReference type="HAMAP" id="MF_01364_B">
    <property type="entry name" value="Ribosomal_uS14_2_B"/>
    <property type="match status" value="1"/>
</dbReference>
<dbReference type="InterPro" id="IPR001209">
    <property type="entry name" value="Ribosomal_uS14"/>
</dbReference>
<dbReference type="InterPro" id="IPR023053">
    <property type="entry name" value="Ribosomal_uS14_bact"/>
</dbReference>
<dbReference type="InterPro" id="IPR018271">
    <property type="entry name" value="Ribosomal_uS14_CS"/>
</dbReference>
<dbReference type="InterPro" id="IPR043140">
    <property type="entry name" value="Ribosomal_uS14_sf"/>
</dbReference>
<dbReference type="NCBIfam" id="NF005974">
    <property type="entry name" value="PRK08061.1"/>
    <property type="match status" value="1"/>
</dbReference>
<dbReference type="PANTHER" id="PTHR19836">
    <property type="entry name" value="30S RIBOSOMAL PROTEIN S14"/>
    <property type="match status" value="1"/>
</dbReference>
<dbReference type="PANTHER" id="PTHR19836:SF19">
    <property type="entry name" value="SMALL RIBOSOMAL SUBUNIT PROTEIN US14M"/>
    <property type="match status" value="1"/>
</dbReference>
<dbReference type="Pfam" id="PF00253">
    <property type="entry name" value="Ribosomal_S14"/>
    <property type="match status" value="1"/>
</dbReference>
<dbReference type="SUPFAM" id="SSF57716">
    <property type="entry name" value="Glucocorticoid receptor-like (DNA-binding domain)"/>
    <property type="match status" value="1"/>
</dbReference>
<dbReference type="PROSITE" id="PS00527">
    <property type="entry name" value="RIBOSOMAL_S14"/>
    <property type="match status" value="1"/>
</dbReference>
<reference key="1">
    <citation type="journal article" date="2000" name="FEMS Microbiol. Lett.">
        <title>Characterization of the Leptospira interrogans S10-spc-alpha operon.</title>
        <authorList>
            <person name="Zuerner R.L."/>
            <person name="Hartskeerl R.A."/>
            <person name="van de Kemp H."/>
            <person name="Bal A.E."/>
        </authorList>
    </citation>
    <scope>NUCLEOTIDE SEQUENCE [GENOMIC DNA]</scope>
    <source>
        <strain>Lai / Serogroup Icterohaemorrhagiae / Serovar lai</strain>
    </source>
</reference>
<reference key="2">
    <citation type="journal article" date="2003" name="Nature">
        <title>Unique physiological and pathogenic features of Leptospira interrogans revealed by whole-genome sequencing.</title>
        <authorList>
            <person name="Ren S.-X."/>
            <person name="Fu G."/>
            <person name="Jiang X.-G."/>
            <person name="Zeng R."/>
            <person name="Miao Y.-G."/>
            <person name="Xu H."/>
            <person name="Zhang Y.-X."/>
            <person name="Xiong H."/>
            <person name="Lu G."/>
            <person name="Lu L.-F."/>
            <person name="Jiang H.-Q."/>
            <person name="Jia J."/>
            <person name="Tu Y.-F."/>
            <person name="Jiang J.-X."/>
            <person name="Gu W.-Y."/>
            <person name="Zhang Y.-Q."/>
            <person name="Cai Z."/>
            <person name="Sheng H.-H."/>
            <person name="Yin H.-F."/>
            <person name="Zhang Y."/>
            <person name="Zhu G.-F."/>
            <person name="Wan M."/>
            <person name="Huang H.-L."/>
            <person name="Qian Z."/>
            <person name="Wang S.-Y."/>
            <person name="Ma W."/>
            <person name="Yao Z.-J."/>
            <person name="Shen Y."/>
            <person name="Qiang B.-Q."/>
            <person name="Xia Q.-C."/>
            <person name="Guo X.-K."/>
            <person name="Danchin A."/>
            <person name="Saint Girons I."/>
            <person name="Somerville R.L."/>
            <person name="Wen Y.-M."/>
            <person name="Shi M.-H."/>
            <person name="Chen Z."/>
            <person name="Xu J.-G."/>
            <person name="Zhao G.-P."/>
        </authorList>
    </citation>
    <scope>NUCLEOTIDE SEQUENCE [LARGE SCALE GENOMIC DNA]</scope>
    <source>
        <strain>56601</strain>
    </source>
</reference>
<feature type="chain" id="PRO_0000130899" description="Small ribosomal subunit protein uS14">
    <location>
        <begin position="1"/>
        <end position="61"/>
    </location>
</feature>
<feature type="binding site" evidence="1">
    <location>
        <position position="24"/>
    </location>
    <ligand>
        <name>Zn(2+)</name>
        <dbReference type="ChEBI" id="CHEBI:29105"/>
    </ligand>
</feature>
<feature type="binding site" evidence="1">
    <location>
        <position position="27"/>
    </location>
    <ligand>
        <name>Zn(2+)</name>
        <dbReference type="ChEBI" id="CHEBI:29105"/>
    </ligand>
</feature>
<feature type="binding site" evidence="1">
    <location>
        <position position="40"/>
    </location>
    <ligand>
        <name>Zn(2+)</name>
        <dbReference type="ChEBI" id="CHEBI:29105"/>
    </ligand>
</feature>
<feature type="binding site" evidence="1">
    <location>
        <position position="43"/>
    </location>
    <ligand>
        <name>Zn(2+)</name>
        <dbReference type="ChEBI" id="CHEBI:29105"/>
    </ligand>
</feature>
<feature type="sequence conflict" description="In Ref. 1; AAD40596." evidence="2" ref="1">
    <original>I</original>
    <variation>T</variation>
    <location>
        <position position="42"/>
    </location>
</feature>
<sequence>MAKTSITVRHQRKKKFEVREYNRCPICGRSRGYLRRFDMCRICFRKLASGAQIPGVVKSSW</sequence>
<comment type="function">
    <text evidence="1">Binds 16S rRNA, required for the assembly of 30S particles and may also be responsible for determining the conformation of the 16S rRNA at the A site.</text>
</comment>
<comment type="cofactor">
    <cofactor evidence="1">
        <name>Zn(2+)</name>
        <dbReference type="ChEBI" id="CHEBI:29105"/>
    </cofactor>
    <text evidence="1">Binds 1 zinc ion per subunit.</text>
</comment>
<comment type="subunit">
    <text evidence="1">Part of the 30S ribosomal subunit. Contacts proteins S3 and S10.</text>
</comment>
<comment type="similarity">
    <text evidence="1">Belongs to the universal ribosomal protein uS14 family. Zinc-binding uS14 subfamily.</text>
</comment>
<protein>
    <recommendedName>
        <fullName evidence="1">Small ribosomal subunit protein uS14</fullName>
    </recommendedName>
    <alternativeName>
        <fullName evidence="2">30S ribosomal protein S14 type Z</fullName>
    </alternativeName>
</protein>
<evidence type="ECO:0000255" key="1">
    <source>
        <dbReference type="HAMAP-Rule" id="MF_01364"/>
    </source>
</evidence>
<evidence type="ECO:0000305" key="2"/>